<gene>
    <name type="primary">RPL30</name>
</gene>
<evidence type="ECO:0000250" key="1">
    <source>
        <dbReference type="UniProtKB" id="P62888"/>
    </source>
</evidence>
<evidence type="ECO:0000269" key="2">
    <source>
    </source>
</evidence>
<evidence type="ECO:0000269" key="3">
    <source>
    </source>
</evidence>
<evidence type="ECO:0000269" key="4">
    <source>
    </source>
</evidence>
<evidence type="ECO:0000269" key="5">
    <source>
    </source>
</evidence>
<evidence type="ECO:0000269" key="6">
    <source>
    </source>
</evidence>
<evidence type="ECO:0000269" key="7">
    <source>
    </source>
</evidence>
<evidence type="ECO:0000269" key="8">
    <source>
    </source>
</evidence>
<evidence type="ECO:0000269" key="9">
    <source>
    </source>
</evidence>
<evidence type="ECO:0000269" key="10">
    <source>
    </source>
</evidence>
<evidence type="ECO:0000269" key="11">
    <source>
    </source>
</evidence>
<evidence type="ECO:0000269" key="12">
    <source>
    </source>
</evidence>
<evidence type="ECO:0000305" key="13"/>
<evidence type="ECO:0007744" key="14">
    <source>
        <dbReference type="PDB" id="5LZS"/>
    </source>
</evidence>
<evidence type="ECO:0007744" key="15">
    <source>
        <dbReference type="PDB" id="5LZT"/>
    </source>
</evidence>
<evidence type="ECO:0007744" key="16">
    <source>
        <dbReference type="PDB" id="6D90"/>
    </source>
</evidence>
<evidence type="ECO:0007744" key="17">
    <source>
        <dbReference type="PDB" id="6D9J"/>
    </source>
</evidence>
<evidence type="ECO:0007744" key="18">
    <source>
        <dbReference type="PDB" id="6HCF"/>
    </source>
</evidence>
<evidence type="ECO:0007744" key="19">
    <source>
        <dbReference type="PDB" id="6HCJ"/>
    </source>
</evidence>
<evidence type="ECO:0007744" key="20">
    <source>
        <dbReference type="PDB" id="6MTB"/>
    </source>
</evidence>
<evidence type="ECO:0007744" key="21">
    <source>
        <dbReference type="PDB" id="6MTC"/>
    </source>
</evidence>
<evidence type="ECO:0007744" key="22">
    <source>
        <dbReference type="PDB" id="6P5I"/>
    </source>
</evidence>
<evidence type="ECO:0007744" key="23">
    <source>
        <dbReference type="PDB" id="6P5J"/>
    </source>
</evidence>
<evidence type="ECO:0007744" key="24">
    <source>
        <dbReference type="PDB" id="6R5Q"/>
    </source>
</evidence>
<evidence type="ECO:0007744" key="25">
    <source>
        <dbReference type="PDB" id="6R6G"/>
    </source>
</evidence>
<evidence type="ECO:0007744" key="26">
    <source>
        <dbReference type="PDB" id="6SGC"/>
    </source>
</evidence>
<evidence type="ECO:0007744" key="27">
    <source>
        <dbReference type="PDB" id="6ZVK"/>
    </source>
</evidence>
<evidence type="ECO:0007744" key="28">
    <source>
        <dbReference type="PDB" id="7A01"/>
    </source>
</evidence>
<evidence type="ECO:0007744" key="29">
    <source>
        <dbReference type="PDB" id="7OYD"/>
    </source>
</evidence>
<evidence type="ECO:0007744" key="30">
    <source>
        <dbReference type="PDB" id="7UCJ"/>
    </source>
</evidence>
<evidence type="ECO:0007744" key="31">
    <source>
        <dbReference type="PDB" id="7UCK"/>
    </source>
</evidence>
<evidence type="ECO:0007744" key="32">
    <source>
        <dbReference type="PDB" id="7ZJW"/>
    </source>
</evidence>
<evidence type="ECO:0007744" key="33">
    <source>
        <dbReference type="PDB" id="7ZJX"/>
    </source>
</evidence>
<name>RL30_RABIT</name>
<proteinExistence type="evidence at protein level"/>
<comment type="function">
    <text evidence="2">Component of the large ribosomal subunit (PubMed:27863242). The ribosome is a large ribonucleoprotein complex responsible for the synthesis of proteins in the cell (PubMed:27863242).</text>
</comment>
<comment type="subunit">
    <text evidence="2 3 4 5 6 7 8 9 10 11 12">Component of the large ribosomal subunit.</text>
</comment>
<comment type="subcellular location">
    <subcellularLocation>
        <location evidence="2 3 4 5 6 7 8 9 10 11 12">Cytoplasm</location>
    </subcellularLocation>
</comment>
<comment type="similarity">
    <text evidence="13">Belongs to the eukaryotic ribosomal protein eL30 family.</text>
</comment>
<accession>G1TDL2</accession>
<feature type="chain" id="PRO_0000460120" description="Large ribosomal subunit protein eL30">
    <location>
        <begin position="1"/>
        <end position="115"/>
    </location>
</feature>
<feature type="modified residue" description="Phosphoserine" evidence="1">
    <location>
        <position position="10"/>
    </location>
</feature>
<feature type="modified residue" description="Phosphoserine" evidence="1">
    <location>
        <position position="16"/>
    </location>
</feature>
<feature type="modified residue" description="N6-acetyllysine; alternate" evidence="1">
    <location>
        <position position="26"/>
    </location>
</feature>
<feature type="cross-link" description="Glycyl lysine isopeptide (Lys-Gly) (interchain with G-Cter in SUMO2); alternate" evidence="1">
    <location>
        <position position="26"/>
    </location>
</feature>
<sequence>MVAAKKTKKSLESINSRLQLVMKSGKYVLGYKQSLKMIRQGKAKLVILANNCPALRKSEIEYYAMLAKTGVHHYSGNNIELGTACGKYYRVCTLSIIDPGDSDIIRSMPEQTGEK</sequence>
<keyword id="KW-0002">3D-structure</keyword>
<keyword id="KW-0007">Acetylation</keyword>
<keyword id="KW-0963">Cytoplasm</keyword>
<keyword id="KW-1017">Isopeptide bond</keyword>
<keyword id="KW-0597">Phosphoprotein</keyword>
<keyword id="KW-1185">Reference proteome</keyword>
<keyword id="KW-0687">Ribonucleoprotein</keyword>
<keyword id="KW-0689">Ribosomal protein</keyword>
<keyword id="KW-0832">Ubl conjugation</keyword>
<organism>
    <name type="scientific">Oryctolagus cuniculus</name>
    <name type="common">Rabbit</name>
    <dbReference type="NCBI Taxonomy" id="9986"/>
    <lineage>
        <taxon>Eukaryota</taxon>
        <taxon>Metazoa</taxon>
        <taxon>Chordata</taxon>
        <taxon>Craniata</taxon>
        <taxon>Vertebrata</taxon>
        <taxon>Euteleostomi</taxon>
        <taxon>Mammalia</taxon>
        <taxon>Eutheria</taxon>
        <taxon>Euarchontoglires</taxon>
        <taxon>Glires</taxon>
        <taxon>Lagomorpha</taxon>
        <taxon>Leporidae</taxon>
        <taxon>Oryctolagus</taxon>
    </lineage>
</organism>
<protein>
    <recommendedName>
        <fullName>Large ribosomal subunit protein eL30</fullName>
    </recommendedName>
    <alternativeName>
        <fullName>60S ribosomal protein L30</fullName>
    </alternativeName>
</protein>
<reference key="1">
    <citation type="journal article" date="2011" name="Nature">
        <title>A high-resolution map of human evolutionary constraint using 29 mammals.</title>
        <authorList>
            <person name="Lindblad-Toh K."/>
            <person name="Garber M."/>
            <person name="Zuk O."/>
            <person name="Lin M.F."/>
            <person name="Parker B.J."/>
            <person name="Washietl S."/>
            <person name="Kheradpour P."/>
            <person name="Ernst J."/>
            <person name="Jordan G."/>
            <person name="Mauceli E."/>
            <person name="Ward L.D."/>
            <person name="Lowe C.B."/>
            <person name="Holloway A.K."/>
            <person name="Clamp M."/>
            <person name="Gnerre S."/>
            <person name="Alfoldi J."/>
            <person name="Beal K."/>
            <person name="Chang J."/>
            <person name="Clawson H."/>
            <person name="Cuff J."/>
            <person name="Di Palma F."/>
            <person name="Fitzgerald S."/>
            <person name="Flicek P."/>
            <person name="Guttman M."/>
            <person name="Hubisz M.J."/>
            <person name="Jaffe D.B."/>
            <person name="Jungreis I."/>
            <person name="Kent W.J."/>
            <person name="Kostka D."/>
            <person name="Lara M."/>
            <person name="Martins A.L."/>
            <person name="Massingham T."/>
            <person name="Moltke I."/>
            <person name="Raney B.J."/>
            <person name="Rasmussen M.D."/>
            <person name="Robinson J."/>
            <person name="Stark A."/>
            <person name="Vilella A.J."/>
            <person name="Wen J."/>
            <person name="Xie X."/>
            <person name="Zody M.C."/>
            <person name="Baldwin J."/>
            <person name="Bloom T."/>
            <person name="Chin C.W."/>
            <person name="Heiman D."/>
            <person name="Nicol R."/>
            <person name="Nusbaum C."/>
            <person name="Young S."/>
            <person name="Wilkinson J."/>
            <person name="Worley K.C."/>
            <person name="Kovar C.L."/>
            <person name="Muzny D.M."/>
            <person name="Gibbs R.A."/>
            <person name="Cree A."/>
            <person name="Dihn H.H."/>
            <person name="Fowler G."/>
            <person name="Jhangiani S."/>
            <person name="Joshi V."/>
            <person name="Lee S."/>
            <person name="Lewis L.R."/>
            <person name="Nazareth L.V."/>
            <person name="Okwuonu G."/>
            <person name="Santibanez J."/>
            <person name="Warren W.C."/>
            <person name="Mardis E.R."/>
            <person name="Weinstock G.M."/>
            <person name="Wilson R.K."/>
            <person name="Delehaunty K."/>
            <person name="Dooling D."/>
            <person name="Fronik C."/>
            <person name="Fulton L."/>
            <person name="Fulton B."/>
            <person name="Graves T."/>
            <person name="Minx P."/>
            <person name="Sodergren E."/>
            <person name="Birney E."/>
            <person name="Margulies E.H."/>
            <person name="Herrero J."/>
            <person name="Green E.D."/>
            <person name="Haussler D."/>
            <person name="Siepel A."/>
            <person name="Goldman N."/>
            <person name="Pollard K.S."/>
            <person name="Pedersen J.S."/>
            <person name="Lander E.S."/>
            <person name="Kellis M."/>
        </authorList>
    </citation>
    <scope>NUCLEOTIDE SEQUENCE [LARGE SCALE GENOMIC DNA]</scope>
    <source>
        <strain>Thorbecke</strain>
    </source>
</reference>
<reference evidence="14 15" key="2">
    <citation type="journal article" date="2016" name="Cell">
        <title>Decoding mammalian ribosome-mRNA states by translational GTPase complexes.</title>
        <authorList>
            <person name="Shao S."/>
            <person name="Murray J."/>
            <person name="Brown A."/>
            <person name="Taunton J."/>
            <person name="Ramakrishnan V."/>
            <person name="Hegde R.S."/>
        </authorList>
    </citation>
    <scope>STRUCTURE BY ELECTRON MICROSCOPY (3.31 ANGSTROMS) OF RIBOSOME</scope>
    <scope>FUNCTION</scope>
    <scope>SUBCELLULAR LOCATION</scope>
    <scope>SUBUNIT</scope>
</reference>
<reference evidence="16 17" key="3">
    <citation type="journal article" date="2018" name="Elife">
        <title>Dual tRNA mimicry in the Cricket paralysis virus IRES uncovers an unexpected similarity with the Hepatitis C Virus IRES.</title>
        <authorList>
            <person name="Pisareva V.P."/>
            <person name="Pisarev A.V."/>
            <person name="Fernandez I.S."/>
        </authorList>
    </citation>
    <scope>STRUCTURE BY ELECTRON MICROSCOPY (3.20 ANGSTROMS) OF RIBOSOME</scope>
    <scope>SUBCELLULAR LOCATION</scope>
    <scope>SUBUNIT</scope>
</reference>
<reference evidence="20 21" key="4">
    <citation type="journal article" date="2018" name="Elife">
        <title>Structures of translationally inactive mammalian ribosomes.</title>
        <authorList>
            <person name="Brown A."/>
            <person name="Baird M.R."/>
            <person name="Yip M.C."/>
            <person name="Murray J."/>
            <person name="Shao S."/>
        </authorList>
    </citation>
    <scope>STRUCTURE BY ELECTRON MICROSCOPY (3.30 ANGSTROMS) OF 10-107 OF RIBOSOME</scope>
    <scope>SUBCELLULAR LOCATION</scope>
    <scope>SUBUNIT</scope>
</reference>
<reference evidence="18 19" key="5">
    <citation type="journal article" date="2018" name="Mol. Cell">
        <title>ZNF598 is a quality control sensor of collided ribosomes.</title>
        <authorList>
            <person name="Juszkiewicz S."/>
            <person name="Chandrasekaran V."/>
            <person name="Lin Z."/>
            <person name="Kraatz S."/>
            <person name="Ramakrishnan V."/>
            <person name="Hegde R.S."/>
        </authorList>
    </citation>
    <scope>STRUCTURE BY ELECTRON MICROSCOPY (3.80 ANGSTROMS) OF RIBOSOME</scope>
    <scope>SUBCELLULAR LOCATION</scope>
    <scope>SUBUNIT</scope>
</reference>
<reference evidence="24 25" key="6">
    <citation type="journal article" date="2019" name="Elife">
        <title>Structural and mutational analysis of the ribosome-arresting human XBP1u.</title>
        <authorList>
            <person name="Shanmuganathan V."/>
            <person name="Schiller N."/>
            <person name="Magoulopoulou A."/>
            <person name="Cheng J."/>
            <person name="Braunger K."/>
            <person name="Cymer F."/>
            <person name="Berninghausen O."/>
            <person name="Beatrix B."/>
            <person name="Kohno K."/>
            <person name="von Heijne G."/>
            <person name="Beckmann R."/>
        </authorList>
    </citation>
    <scope>STRUCTURE BY ELECTRON MICROSCOPY (3.00 ANGSTROMS) OF 10-107 OF RIBOSOME</scope>
    <scope>SUBCELLULAR LOCATION</scope>
    <scope>SUBUNIT</scope>
</reference>
<reference evidence="22 23" key="7">
    <citation type="journal article" date="2019" name="EMBO J.">
        <title>The Israeli acute paralysis virus IRES captures host ribosomes by mimicking a ribosomal state with hybrid tRNAs.</title>
        <authorList>
            <person name="Acosta-Reyes F."/>
            <person name="Neupane R."/>
            <person name="Frank J."/>
            <person name="Fernandez I.S."/>
        </authorList>
    </citation>
    <scope>STRUCTURE BY ELECTRON MICROSCOPY (3.10 ANGSTROMS) OF RIBOSOME</scope>
    <scope>SUBCELLULAR LOCATION</scope>
    <scope>SUBUNIT</scope>
</reference>
<reference evidence="26" key="8">
    <citation type="journal article" date="2019" name="Nat. Struct. Mol. Biol.">
        <title>Mechanism of ribosome stalling during translation of a poly(A) tail.</title>
        <authorList>
            <person name="Chandrasekaran V."/>
            <person name="Juszkiewicz S."/>
            <person name="Choi J."/>
            <person name="Puglisi J.D."/>
            <person name="Brown A."/>
            <person name="Shao S."/>
            <person name="Ramakrishnan V."/>
            <person name="Hegde R.S."/>
        </authorList>
    </citation>
    <scope>STRUCTURE BY ELECTRON MICROSCOPY (2.80 ANGSTROMS) OF RIBOSOME</scope>
    <scope>SUBCELLULAR LOCATION</scope>
    <scope>SUBUNIT</scope>
</reference>
<reference evidence="27 28" key="9">
    <citation type="journal article" date="2020" name="Cell Rep.">
        <title>The Halastavi arva virus intergenic region IRES promotes translation by the simplest possible initiation mechanism.</title>
        <authorList>
            <person name="Abaeva I.S."/>
            <person name="Vicens Q."/>
            <person name="Bochler A."/>
            <person name="Soufari H."/>
            <person name="Simonetti A."/>
            <person name="Pestova T.V."/>
            <person name="Hashem Y."/>
            <person name="Hellen C.U.T."/>
        </authorList>
    </citation>
    <scope>STRUCTURE BY ELECTRON MICROSCOPY (3.49 ANGSTROMS) OF 13-106 OF RIBOSOME</scope>
    <scope>SUBCELLULAR LOCATION</scope>
    <scope>SUBUNIT</scope>
</reference>
<reference evidence="30 31" key="10">
    <citation type="journal article" date="2022" name="Mol. Cell">
        <title>Direct epitranscriptomic regulation of mammalian translation initiation through N4-acetylcytidine.</title>
        <authorList>
            <person name="Arango D."/>
            <person name="Sturgill D."/>
            <person name="Yang R."/>
            <person name="Kanai T."/>
            <person name="Bauer P."/>
            <person name="Roy J."/>
            <person name="Wang Z."/>
            <person name="Hosogane M."/>
            <person name="Schiffers S."/>
            <person name="Oberdoerffer S."/>
        </authorList>
    </citation>
    <scope>STRUCTURE BY ELECTRON MICROSCOPY (2.80 ANGSTROMS) OF 10-107 OF RIBOSOME</scope>
    <scope>SUBCELLULAR LOCATION</scope>
    <scope>SUBUNIT</scope>
</reference>
<reference evidence="32 33" key="11">
    <citation type="journal article" date="2022" name="Science">
        <title>Structure of the mammalian ribosome as it decodes the selenocysteine UGA codon.</title>
        <authorList>
            <person name="Hilal T."/>
            <person name="Killam B.Y."/>
            <person name="Grozdanovic M."/>
            <person name="Dobosz-Bartoszek M."/>
            <person name="Loerke J."/>
            <person name="Buerger J."/>
            <person name="Mielke T."/>
            <person name="Copeland P.R."/>
            <person name="Simonovic M."/>
            <person name="Spahn C.M.T."/>
        </authorList>
    </citation>
    <scope>STRUCTURE BY ELECTRON MICROSCOPY (2.80 ANGSTROMS) OF RIBOSOME</scope>
    <scope>SUBCELLULAR LOCATION</scope>
    <scope>SUBUNIT</scope>
</reference>
<reference evidence="29" key="12">
    <citation type="journal article" date="2023" name="Nature">
        <title>A molecular network of conserved factors keeps ribosomes dormant in the egg.</title>
        <authorList>
            <person name="Leesch F."/>
            <person name="Lorenzo-Orts L."/>
            <person name="Pribitzer C."/>
            <person name="Grishkovskaya I."/>
            <person name="Roehsner J."/>
            <person name="Chugunova A."/>
            <person name="Matzinger M."/>
            <person name="Roitinger E."/>
            <person name="Belacic K."/>
            <person name="Kandolf S."/>
            <person name="Lin T.Y."/>
            <person name="Mechtler K."/>
            <person name="Meinhart A."/>
            <person name="Haselbach D."/>
            <person name="Pauli A."/>
        </authorList>
    </citation>
    <scope>STRUCTURE BY ELECTRON MICROSCOPY (2.30 ANGSTROMS) OF RIBOSOME</scope>
    <scope>SUBCELLULAR LOCATION</scope>
    <scope>SUBUNIT</scope>
</reference>
<dbReference type="EMBL" id="AAGW02012549">
    <property type="status" value="NOT_ANNOTATED_CDS"/>
    <property type="molecule type" value="Genomic_DNA"/>
</dbReference>
<dbReference type="RefSeq" id="XP_002710752.1">
    <property type="nucleotide sequence ID" value="XM_002710706.4"/>
</dbReference>
<dbReference type="PDB" id="5LZS">
    <property type="method" value="EM"/>
    <property type="resolution" value="3.31 A"/>
    <property type="chains" value="c=1-115"/>
</dbReference>
<dbReference type="PDB" id="5LZT">
    <property type="method" value="EM"/>
    <property type="resolution" value="3.65 A"/>
    <property type="chains" value="c=1-115"/>
</dbReference>
<dbReference type="PDB" id="5LZU">
    <property type="method" value="EM"/>
    <property type="resolution" value="3.75 A"/>
    <property type="chains" value="c=1-115"/>
</dbReference>
<dbReference type="PDB" id="5LZV">
    <property type="method" value="EM"/>
    <property type="resolution" value="3.35 A"/>
    <property type="chains" value="c=1-115"/>
</dbReference>
<dbReference type="PDB" id="5LZW">
    <property type="method" value="EM"/>
    <property type="resolution" value="3.53 A"/>
    <property type="chains" value="c=1-115"/>
</dbReference>
<dbReference type="PDB" id="5LZX">
    <property type="method" value="EM"/>
    <property type="resolution" value="3.67 A"/>
    <property type="chains" value="c=1-115"/>
</dbReference>
<dbReference type="PDB" id="5LZY">
    <property type="method" value="EM"/>
    <property type="resolution" value="3.99 A"/>
    <property type="chains" value="c=1-115"/>
</dbReference>
<dbReference type="PDB" id="5LZZ">
    <property type="method" value="EM"/>
    <property type="resolution" value="3.47 A"/>
    <property type="chains" value="c=1-115"/>
</dbReference>
<dbReference type="PDB" id="6D90">
    <property type="method" value="EM"/>
    <property type="resolution" value="3.20 A"/>
    <property type="chains" value="c=1-115"/>
</dbReference>
<dbReference type="PDB" id="6D9J">
    <property type="method" value="EM"/>
    <property type="resolution" value="3.20 A"/>
    <property type="chains" value="c=1-115"/>
</dbReference>
<dbReference type="PDB" id="6HCF">
    <property type="method" value="EM"/>
    <property type="resolution" value="3.90 A"/>
    <property type="chains" value="c3=1-115"/>
</dbReference>
<dbReference type="PDB" id="6HCJ">
    <property type="method" value="EM"/>
    <property type="resolution" value="3.80 A"/>
    <property type="chains" value="c3=1-115"/>
</dbReference>
<dbReference type="PDB" id="6HCM">
    <property type="method" value="EM"/>
    <property type="resolution" value="6.80 A"/>
    <property type="chains" value="c3=1-115"/>
</dbReference>
<dbReference type="PDB" id="6HCQ">
    <property type="method" value="EM"/>
    <property type="resolution" value="6.50 A"/>
    <property type="chains" value="c3=1-115"/>
</dbReference>
<dbReference type="PDB" id="6MTB">
    <property type="method" value="EM"/>
    <property type="resolution" value="3.60 A"/>
    <property type="chains" value="c=10-107"/>
</dbReference>
<dbReference type="PDB" id="6MTC">
    <property type="method" value="EM"/>
    <property type="resolution" value="3.40 A"/>
    <property type="chains" value="c=10-107"/>
</dbReference>
<dbReference type="PDB" id="6MTD">
    <property type="method" value="EM"/>
    <property type="resolution" value="3.30 A"/>
    <property type="chains" value="c=10-107"/>
</dbReference>
<dbReference type="PDB" id="6MTE">
    <property type="method" value="EM"/>
    <property type="resolution" value="3.40 A"/>
    <property type="chains" value="c=10-107"/>
</dbReference>
<dbReference type="PDB" id="6P5I">
    <property type="method" value="EM"/>
    <property type="resolution" value="3.10 A"/>
    <property type="chains" value="Ac=1-115"/>
</dbReference>
<dbReference type="PDB" id="6P5J">
    <property type="method" value="EM"/>
    <property type="resolution" value="3.10 A"/>
    <property type="chains" value="Ac=1-115"/>
</dbReference>
<dbReference type="PDB" id="6P5K">
    <property type="method" value="EM"/>
    <property type="resolution" value="3.10 A"/>
    <property type="chains" value="Ac=1-115"/>
</dbReference>
<dbReference type="PDB" id="6P5N">
    <property type="method" value="EM"/>
    <property type="resolution" value="3.20 A"/>
    <property type="chains" value="Ac=1-115"/>
</dbReference>
<dbReference type="PDB" id="6R5Q">
    <property type="method" value="EM"/>
    <property type="resolution" value="3.00 A"/>
    <property type="chains" value="c=10-107"/>
</dbReference>
<dbReference type="PDB" id="6R6G">
    <property type="method" value="EM"/>
    <property type="resolution" value="3.70 A"/>
    <property type="chains" value="c=10-107"/>
</dbReference>
<dbReference type="PDB" id="6R7Q">
    <property type="method" value="EM"/>
    <property type="resolution" value="3.90 A"/>
    <property type="chains" value="c=10-107"/>
</dbReference>
<dbReference type="PDB" id="6SGC">
    <property type="method" value="EM"/>
    <property type="resolution" value="2.80 A"/>
    <property type="chains" value="c2=1-115"/>
</dbReference>
<dbReference type="PDB" id="6T59">
    <property type="method" value="EM"/>
    <property type="resolution" value="3.11 A"/>
    <property type="chains" value="c3=1-115"/>
</dbReference>
<dbReference type="PDB" id="6ZVK">
    <property type="method" value="EM"/>
    <property type="resolution" value="3.49 A"/>
    <property type="chains" value="13=13-106"/>
</dbReference>
<dbReference type="PDB" id="7A01">
    <property type="method" value="EM"/>
    <property type="resolution" value="3.60 A"/>
    <property type="chains" value="13=13-106"/>
</dbReference>
<dbReference type="PDB" id="7MDZ">
    <property type="method" value="EM"/>
    <property type="resolution" value="3.20 A"/>
    <property type="chains" value="c=1-115"/>
</dbReference>
<dbReference type="PDB" id="7NWG">
    <property type="method" value="EM"/>
    <property type="resolution" value="3.80 A"/>
    <property type="chains" value="c3=1-115"/>
</dbReference>
<dbReference type="PDB" id="7NWH">
    <property type="method" value="EM"/>
    <property type="resolution" value="4.10 A"/>
    <property type="chains" value="c=1-115"/>
</dbReference>
<dbReference type="PDB" id="7NWI">
    <property type="method" value="EM"/>
    <property type="resolution" value="3.13 A"/>
    <property type="chains" value="c=1-115"/>
</dbReference>
<dbReference type="PDB" id="7O7Y">
    <property type="method" value="EM"/>
    <property type="resolution" value="2.20 A"/>
    <property type="chains" value="Bc=1-115"/>
</dbReference>
<dbReference type="PDB" id="7O7Z">
    <property type="method" value="EM"/>
    <property type="resolution" value="2.40 A"/>
    <property type="chains" value="Bc=1-115"/>
</dbReference>
<dbReference type="PDB" id="7O80">
    <property type="method" value="EM"/>
    <property type="resolution" value="2.90 A"/>
    <property type="chains" value="Bc=1-115"/>
</dbReference>
<dbReference type="PDB" id="7O81">
    <property type="method" value="EM"/>
    <property type="resolution" value="3.10 A"/>
    <property type="chains" value="Bc=1-115"/>
</dbReference>
<dbReference type="PDB" id="7OBR">
    <property type="method" value="EM"/>
    <property type="resolution" value="2.80 A"/>
    <property type="chains" value="c=13-106"/>
</dbReference>
<dbReference type="PDB" id="7OYD">
    <property type="method" value="EM"/>
    <property type="resolution" value="2.30 A"/>
    <property type="chains" value="c=1-115"/>
</dbReference>
<dbReference type="PDB" id="7QWQ">
    <property type="method" value="EM"/>
    <property type="resolution" value="2.83 A"/>
    <property type="chains" value="c=1-115"/>
</dbReference>
<dbReference type="PDB" id="7QWR">
    <property type="method" value="EM"/>
    <property type="resolution" value="2.90 A"/>
    <property type="chains" value="c=1-115"/>
</dbReference>
<dbReference type="PDB" id="7QWS">
    <property type="method" value="EM"/>
    <property type="resolution" value="3.40 A"/>
    <property type="chains" value="c=1-115"/>
</dbReference>
<dbReference type="PDB" id="7TM3">
    <property type="method" value="EM"/>
    <property type="resolution" value="3.25 A"/>
    <property type="chains" value="c=1-115"/>
</dbReference>
<dbReference type="PDB" id="7TOR">
    <property type="method" value="EM"/>
    <property type="resolution" value="2.90 A"/>
    <property type="chains" value="AL30=10-107"/>
</dbReference>
<dbReference type="PDB" id="7TUT">
    <property type="method" value="EM"/>
    <property type="resolution" value="3.88 A"/>
    <property type="chains" value="c=1-115"/>
</dbReference>
<dbReference type="PDB" id="7UCJ">
    <property type="method" value="EM"/>
    <property type="resolution" value="3.10 A"/>
    <property type="chains" value="c=13-107"/>
</dbReference>
<dbReference type="PDB" id="7UCK">
    <property type="method" value="EM"/>
    <property type="resolution" value="2.80 A"/>
    <property type="chains" value="c=10-107"/>
</dbReference>
<dbReference type="PDB" id="7ZJW">
    <property type="method" value="EM"/>
    <property type="resolution" value="2.80 A"/>
    <property type="chains" value="Lf=1-115"/>
</dbReference>
<dbReference type="PDB" id="7ZJX">
    <property type="method" value="EM"/>
    <property type="resolution" value="3.10 A"/>
    <property type="chains" value="Lf=1-115"/>
</dbReference>
<dbReference type="PDB" id="8B5L">
    <property type="method" value="EM"/>
    <property type="resolution" value="2.86 A"/>
    <property type="chains" value="c=10-107"/>
</dbReference>
<dbReference type="PDB" id="8B6C">
    <property type="method" value="EM"/>
    <property type="resolution" value="2.79 A"/>
    <property type="chains" value="c=10-107"/>
</dbReference>
<dbReference type="PDB" id="8BHF">
    <property type="method" value="EM"/>
    <property type="resolution" value="3.10 A"/>
    <property type="chains" value="P1=10-107"/>
</dbReference>
<dbReference type="PDB" id="8BPO">
    <property type="method" value="EM"/>
    <property type="resolution" value="2.80 A"/>
    <property type="chains" value="b2=1-115"/>
</dbReference>
<dbReference type="PDB" id="8BTK">
    <property type="method" value="EM"/>
    <property type="resolution" value="3.50 A"/>
    <property type="chains" value="Bc=1-115"/>
</dbReference>
<dbReference type="PDB" id="8P2K">
    <property type="method" value="EM"/>
    <property type="resolution" value="2.90 A"/>
    <property type="chains" value="Bc=1-115"/>
</dbReference>
<dbReference type="PDB" id="8RJB">
    <property type="method" value="EM"/>
    <property type="resolution" value="2.69 A"/>
    <property type="chains" value="c=1-115"/>
</dbReference>
<dbReference type="PDB" id="8RJC">
    <property type="method" value="EM"/>
    <property type="resolution" value="2.90 A"/>
    <property type="chains" value="c=1-115"/>
</dbReference>
<dbReference type="PDB" id="8RJD">
    <property type="method" value="EM"/>
    <property type="resolution" value="2.79 A"/>
    <property type="chains" value="c=1-115"/>
</dbReference>
<dbReference type="PDB" id="8SCB">
    <property type="method" value="EM"/>
    <property type="resolution" value="2.50 A"/>
    <property type="chains" value="c=1-115"/>
</dbReference>
<dbReference type="PDB" id="8VFT">
    <property type="method" value="EM"/>
    <property type="resolution" value="3.30 A"/>
    <property type="chains" value="c=1-115"/>
</dbReference>
<dbReference type="PDB" id="9BDL">
    <property type="method" value="EM"/>
    <property type="resolution" value="2.80 A"/>
    <property type="chains" value="AL30=10-107"/>
</dbReference>
<dbReference type="PDB" id="9BDN">
    <property type="method" value="EM"/>
    <property type="resolution" value="3.10 A"/>
    <property type="chains" value="AL30=10-107"/>
</dbReference>
<dbReference type="PDB" id="9BDP">
    <property type="method" value="EM"/>
    <property type="resolution" value="3.70 A"/>
    <property type="chains" value="AL30=10-107"/>
</dbReference>
<dbReference type="PDB" id="9F1B">
    <property type="method" value="EM"/>
    <property type="resolution" value="3.01 A"/>
    <property type="chains" value="Bc=1-115"/>
</dbReference>
<dbReference type="PDB" id="9F1C">
    <property type="method" value="EM"/>
    <property type="resolution" value="3.78 A"/>
    <property type="chains" value="Bc=1-115"/>
</dbReference>
<dbReference type="PDB" id="9F1D">
    <property type="method" value="EM"/>
    <property type="resolution" value="3.26 A"/>
    <property type="chains" value="Bc=1-115"/>
</dbReference>
<dbReference type="PDBsum" id="5LZS"/>
<dbReference type="PDBsum" id="5LZT"/>
<dbReference type="PDBsum" id="5LZU"/>
<dbReference type="PDBsum" id="5LZV"/>
<dbReference type="PDBsum" id="5LZW"/>
<dbReference type="PDBsum" id="5LZX"/>
<dbReference type="PDBsum" id="5LZY"/>
<dbReference type="PDBsum" id="5LZZ"/>
<dbReference type="PDBsum" id="6D90"/>
<dbReference type="PDBsum" id="6D9J"/>
<dbReference type="PDBsum" id="6HCF"/>
<dbReference type="PDBsum" id="6HCJ"/>
<dbReference type="PDBsum" id="6HCM"/>
<dbReference type="PDBsum" id="6HCQ"/>
<dbReference type="PDBsum" id="6MTB"/>
<dbReference type="PDBsum" id="6MTC"/>
<dbReference type="PDBsum" id="6MTD"/>
<dbReference type="PDBsum" id="6MTE"/>
<dbReference type="PDBsum" id="6P5I"/>
<dbReference type="PDBsum" id="6P5J"/>
<dbReference type="PDBsum" id="6P5K"/>
<dbReference type="PDBsum" id="6P5N"/>
<dbReference type="PDBsum" id="6R5Q"/>
<dbReference type="PDBsum" id="6R6G"/>
<dbReference type="PDBsum" id="6R7Q"/>
<dbReference type="PDBsum" id="6SGC"/>
<dbReference type="PDBsum" id="6T59"/>
<dbReference type="PDBsum" id="6ZVK"/>
<dbReference type="PDBsum" id="7A01"/>
<dbReference type="PDBsum" id="7MDZ"/>
<dbReference type="PDBsum" id="7NWG"/>
<dbReference type="PDBsum" id="7NWH"/>
<dbReference type="PDBsum" id="7NWI"/>
<dbReference type="PDBsum" id="7O7Y"/>
<dbReference type="PDBsum" id="7O7Z"/>
<dbReference type="PDBsum" id="7O80"/>
<dbReference type="PDBsum" id="7O81"/>
<dbReference type="PDBsum" id="7OBR"/>
<dbReference type="PDBsum" id="7OYD"/>
<dbReference type="PDBsum" id="7QWQ"/>
<dbReference type="PDBsum" id="7QWR"/>
<dbReference type="PDBsum" id="7QWS"/>
<dbReference type="PDBsum" id="7TM3"/>
<dbReference type="PDBsum" id="7TOR"/>
<dbReference type="PDBsum" id="7TUT"/>
<dbReference type="PDBsum" id="7UCJ"/>
<dbReference type="PDBsum" id="7UCK"/>
<dbReference type="PDBsum" id="7ZJW"/>
<dbReference type="PDBsum" id="7ZJX"/>
<dbReference type="PDBsum" id="8B5L"/>
<dbReference type="PDBsum" id="8B6C"/>
<dbReference type="PDBsum" id="8BHF"/>
<dbReference type="PDBsum" id="8BPO"/>
<dbReference type="PDBsum" id="8BTK"/>
<dbReference type="PDBsum" id="8P2K"/>
<dbReference type="PDBsum" id="8RJB"/>
<dbReference type="PDBsum" id="8RJC"/>
<dbReference type="PDBsum" id="8RJD"/>
<dbReference type="PDBsum" id="8SCB"/>
<dbReference type="PDBsum" id="8VFT"/>
<dbReference type="PDBsum" id="9BDL"/>
<dbReference type="PDBsum" id="9BDN"/>
<dbReference type="PDBsum" id="9BDP"/>
<dbReference type="PDBsum" id="9F1B"/>
<dbReference type="PDBsum" id="9F1C"/>
<dbReference type="PDBsum" id="9F1D"/>
<dbReference type="EMDB" id="EMD-0099"/>
<dbReference type="EMDB" id="EMD-0100"/>
<dbReference type="EMDB" id="EMD-0192"/>
<dbReference type="EMDB" id="EMD-0194"/>
<dbReference type="EMDB" id="EMD-0195"/>
<dbReference type="EMDB" id="EMD-0197"/>
<dbReference type="EMDB" id="EMD-10181"/>
<dbReference type="EMDB" id="EMD-10380"/>
<dbReference type="EMDB" id="EMD-11459"/>
<dbReference type="EMDB" id="EMD-11590"/>
<dbReference type="EMDB" id="EMD-12303"/>
<dbReference type="EMDB" id="EMD-12631"/>
<dbReference type="EMDB" id="EMD-12632"/>
<dbReference type="EMDB" id="EMD-12633"/>
<dbReference type="EMDB" id="EMD-12756"/>
<dbReference type="EMDB" id="EMD-12757"/>
<dbReference type="EMDB" id="EMD-12758"/>
<dbReference type="EMDB" id="EMD-12759"/>
<dbReference type="EMDB" id="EMD-12801"/>
<dbReference type="EMDB" id="EMD-13114"/>
<dbReference type="EMDB" id="EMD-14191"/>
<dbReference type="EMDB" id="EMD-14192"/>
<dbReference type="EMDB" id="EMD-14193"/>
<dbReference type="EMDB" id="EMD-14751"/>
<dbReference type="EMDB" id="EMD-14752"/>
<dbReference type="EMDB" id="EMD-15860"/>
<dbReference type="EMDB" id="EMD-15863"/>
<dbReference type="EMDB" id="EMD-16052"/>
<dbReference type="EMDB" id="EMD-16155"/>
<dbReference type="EMDB" id="EMD-16232"/>
<dbReference type="EMDB" id="EMD-17367"/>
<dbReference type="EMDB" id="EMD-19195"/>
<dbReference type="EMDB" id="EMD-19197"/>
<dbReference type="EMDB" id="EMD-19198"/>
<dbReference type="EMDB" id="EMD-20255"/>
<dbReference type="EMDB" id="EMD-20256"/>
<dbReference type="EMDB" id="EMD-20257"/>
<dbReference type="EMDB" id="EMD-20258"/>
<dbReference type="EMDB" id="EMD-23785"/>
<dbReference type="EMDB" id="EMD-25994"/>
<dbReference type="EMDB" id="EMD-26035"/>
<dbReference type="EMDB" id="EMD-26036"/>
<dbReference type="EMDB" id="EMD-26133"/>
<dbReference type="EMDB" id="EMD-26444"/>
<dbReference type="EMDB" id="EMD-26445"/>
<dbReference type="EMDB" id="EMD-40344"/>
<dbReference type="EMDB" id="EMD-4130"/>
<dbReference type="EMDB" id="EMD-4131"/>
<dbReference type="EMDB" id="EMD-4132"/>
<dbReference type="EMDB" id="EMD-4133"/>
<dbReference type="EMDB" id="EMD-4134"/>
<dbReference type="EMDB" id="EMD-4135"/>
<dbReference type="EMDB" id="EMD-4136"/>
<dbReference type="EMDB" id="EMD-4137"/>
<dbReference type="EMDB" id="EMD-4300"/>
<dbReference type="EMDB" id="EMD-4315"/>
<dbReference type="EMDB" id="EMD-4316"/>
<dbReference type="EMDB" id="EMD-4317"/>
<dbReference type="EMDB" id="EMD-43189"/>
<dbReference type="EMDB" id="EMD-44461"/>
<dbReference type="EMDB" id="EMD-44463"/>
<dbReference type="EMDB" id="EMD-44464"/>
<dbReference type="EMDB" id="EMD-4729"/>
<dbReference type="EMDB" id="EMD-4735"/>
<dbReference type="EMDB" id="EMD-4737"/>
<dbReference type="EMDB" id="EMD-4745"/>
<dbReference type="EMDB" id="EMD-50124"/>
<dbReference type="EMDB" id="EMD-50125"/>
<dbReference type="EMDB" id="EMD-50126"/>
<dbReference type="EMDB" id="EMD-7834"/>
<dbReference type="EMDB" id="EMD-7836"/>
<dbReference type="EMDB" id="EMD-9237"/>
<dbReference type="EMDB" id="EMD-9239"/>
<dbReference type="EMDB" id="EMD-9240"/>
<dbReference type="EMDB" id="EMD-9242"/>
<dbReference type="SMR" id="G1TDL2"/>
<dbReference type="FunCoup" id="G1TDL2">
    <property type="interactions" value="1465"/>
</dbReference>
<dbReference type="IntAct" id="G1TDL2">
    <property type="interactions" value="1"/>
</dbReference>
<dbReference type="STRING" id="9986.ENSOCUP00000014941"/>
<dbReference type="PaxDb" id="9986-ENSOCUP00000026221"/>
<dbReference type="Ensembl" id="ENSOCUT00000017384.2">
    <property type="protein sequence ID" value="ENSOCUP00000014941.2"/>
    <property type="gene ID" value="ENSOCUG00000017386.4"/>
</dbReference>
<dbReference type="GeneID" id="100338973"/>
<dbReference type="KEGG" id="ocu:100338973"/>
<dbReference type="CTD" id="6156"/>
<dbReference type="eggNOG" id="KOG2988">
    <property type="taxonomic scope" value="Eukaryota"/>
</dbReference>
<dbReference type="GeneTree" id="ENSGT00390000012138"/>
<dbReference type="HOGENOM" id="CLU_130502_0_1_1"/>
<dbReference type="InParanoid" id="G1TDL2"/>
<dbReference type="OMA" id="YFQGGNN"/>
<dbReference type="OrthoDB" id="9557386at2759"/>
<dbReference type="TreeFam" id="TF300252"/>
<dbReference type="Proteomes" id="UP000001811">
    <property type="component" value="Chromosome 3"/>
</dbReference>
<dbReference type="Bgee" id="ENSOCUG00000017386">
    <property type="expression patterns" value="Expressed in upper lobe of left lung and 14 other cell types or tissues"/>
</dbReference>
<dbReference type="GO" id="GO:0022625">
    <property type="term" value="C:cytosolic large ribosomal subunit"/>
    <property type="evidence" value="ECO:0007669"/>
    <property type="project" value="Ensembl"/>
</dbReference>
<dbReference type="GO" id="GO:0005634">
    <property type="term" value="C:nucleus"/>
    <property type="evidence" value="ECO:0007669"/>
    <property type="project" value="Ensembl"/>
</dbReference>
<dbReference type="GO" id="GO:0014069">
    <property type="term" value="C:postsynaptic density"/>
    <property type="evidence" value="ECO:0007669"/>
    <property type="project" value="Ensembl"/>
</dbReference>
<dbReference type="GO" id="GO:0003723">
    <property type="term" value="F:RNA binding"/>
    <property type="evidence" value="ECO:0007669"/>
    <property type="project" value="InterPro"/>
</dbReference>
<dbReference type="GO" id="GO:0003735">
    <property type="term" value="F:structural constituent of ribosome"/>
    <property type="evidence" value="ECO:0007669"/>
    <property type="project" value="Ensembl"/>
</dbReference>
<dbReference type="GO" id="GO:0061844">
    <property type="term" value="P:antimicrobial humoral immune response mediated by antimicrobial peptide"/>
    <property type="evidence" value="ECO:0007669"/>
    <property type="project" value="Ensembl"/>
</dbReference>
<dbReference type="GO" id="GO:0002181">
    <property type="term" value="P:cytoplasmic translation"/>
    <property type="evidence" value="ECO:0007669"/>
    <property type="project" value="Ensembl"/>
</dbReference>
<dbReference type="GO" id="GO:0050829">
    <property type="term" value="P:defense response to Gram-negative bacterium"/>
    <property type="evidence" value="ECO:0007669"/>
    <property type="project" value="Ensembl"/>
</dbReference>
<dbReference type="GO" id="GO:0031640">
    <property type="term" value="P:killing of cells of another organism"/>
    <property type="evidence" value="ECO:0007669"/>
    <property type="project" value="Ensembl"/>
</dbReference>
<dbReference type="FunFam" id="3.30.1330.30:FF:000001">
    <property type="entry name" value="60S ribosomal protein L30"/>
    <property type="match status" value="1"/>
</dbReference>
<dbReference type="Gene3D" id="3.30.1330.30">
    <property type="match status" value="1"/>
</dbReference>
<dbReference type="HAMAP" id="MF_00481">
    <property type="entry name" value="Ribosomal_eL30"/>
    <property type="match status" value="1"/>
</dbReference>
<dbReference type="InterPro" id="IPR000231">
    <property type="entry name" value="Ribosomal_eL30"/>
</dbReference>
<dbReference type="InterPro" id="IPR039109">
    <property type="entry name" value="Ribosomal_eL30-like"/>
</dbReference>
<dbReference type="InterPro" id="IPR029064">
    <property type="entry name" value="Ribosomal_eL30-like_sf"/>
</dbReference>
<dbReference type="InterPro" id="IPR022991">
    <property type="entry name" value="Ribosomal_eL30_CS"/>
</dbReference>
<dbReference type="InterPro" id="IPR004038">
    <property type="entry name" value="Ribosomal_eL8/eL30/eS12/Gad45"/>
</dbReference>
<dbReference type="NCBIfam" id="NF002172">
    <property type="entry name" value="PRK01018.1"/>
    <property type="match status" value="1"/>
</dbReference>
<dbReference type="PANTHER" id="PTHR11449">
    <property type="entry name" value="RIBOSOMAL PROTEIN L30"/>
    <property type="match status" value="1"/>
</dbReference>
<dbReference type="Pfam" id="PF01248">
    <property type="entry name" value="Ribosomal_L7Ae"/>
    <property type="match status" value="1"/>
</dbReference>
<dbReference type="SUPFAM" id="SSF55315">
    <property type="entry name" value="L30e-like"/>
    <property type="match status" value="1"/>
</dbReference>
<dbReference type="PROSITE" id="PS00709">
    <property type="entry name" value="RIBOSOMAL_L30E_1"/>
    <property type="match status" value="1"/>
</dbReference>
<dbReference type="PROSITE" id="PS00993">
    <property type="entry name" value="RIBOSOMAL_L30E_2"/>
    <property type="match status" value="1"/>
</dbReference>